<feature type="chain" id="PRO_0000292903" description="3-ketoacyl-CoA thiolase">
    <location>
        <begin position="1"/>
        <end position="387"/>
    </location>
</feature>
<feature type="active site" description="Acyl-thioester intermediate" evidence="1">
    <location>
        <position position="91"/>
    </location>
</feature>
<feature type="active site" description="Proton acceptor" evidence="1">
    <location>
        <position position="343"/>
    </location>
</feature>
<feature type="active site" description="Proton acceptor" evidence="1">
    <location>
        <position position="373"/>
    </location>
</feature>
<dbReference type="EC" id="2.3.1.16" evidence="1"/>
<dbReference type="EMBL" id="CP000606">
    <property type="protein sequence ID" value="ABO21891.1"/>
    <property type="molecule type" value="Genomic_DNA"/>
</dbReference>
<dbReference type="RefSeq" id="WP_011863828.1">
    <property type="nucleotide sequence ID" value="NC_009092.1"/>
</dbReference>
<dbReference type="SMR" id="A3Q8U3"/>
<dbReference type="STRING" id="323850.Shew_0018"/>
<dbReference type="KEGG" id="slo:Shew_0018"/>
<dbReference type="eggNOG" id="COG0183">
    <property type="taxonomic scope" value="Bacteria"/>
</dbReference>
<dbReference type="HOGENOM" id="CLU_031026_2_3_6"/>
<dbReference type="OrthoDB" id="8951704at2"/>
<dbReference type="UniPathway" id="UPA00659"/>
<dbReference type="Proteomes" id="UP000001558">
    <property type="component" value="Chromosome"/>
</dbReference>
<dbReference type="GO" id="GO:0005737">
    <property type="term" value="C:cytoplasm"/>
    <property type="evidence" value="ECO:0007669"/>
    <property type="project" value="UniProtKB-SubCell"/>
</dbReference>
<dbReference type="GO" id="GO:0003988">
    <property type="term" value="F:acetyl-CoA C-acyltransferase activity"/>
    <property type="evidence" value="ECO:0007669"/>
    <property type="project" value="UniProtKB-UniRule"/>
</dbReference>
<dbReference type="GO" id="GO:0006635">
    <property type="term" value="P:fatty acid beta-oxidation"/>
    <property type="evidence" value="ECO:0007669"/>
    <property type="project" value="UniProtKB-UniRule"/>
</dbReference>
<dbReference type="GO" id="GO:0010124">
    <property type="term" value="P:phenylacetate catabolic process"/>
    <property type="evidence" value="ECO:0007669"/>
    <property type="project" value="TreeGrafter"/>
</dbReference>
<dbReference type="CDD" id="cd00751">
    <property type="entry name" value="thiolase"/>
    <property type="match status" value="1"/>
</dbReference>
<dbReference type="FunFam" id="3.40.47.10:FF:000010">
    <property type="entry name" value="Acetyl-CoA acetyltransferase (Thiolase)"/>
    <property type="match status" value="1"/>
</dbReference>
<dbReference type="Gene3D" id="3.40.47.10">
    <property type="match status" value="2"/>
</dbReference>
<dbReference type="HAMAP" id="MF_01620">
    <property type="entry name" value="FadA"/>
    <property type="match status" value="1"/>
</dbReference>
<dbReference type="InterPro" id="IPR012805">
    <property type="entry name" value="FadA"/>
</dbReference>
<dbReference type="InterPro" id="IPR002155">
    <property type="entry name" value="Thiolase"/>
</dbReference>
<dbReference type="InterPro" id="IPR016039">
    <property type="entry name" value="Thiolase-like"/>
</dbReference>
<dbReference type="InterPro" id="IPR050215">
    <property type="entry name" value="Thiolase-like_sf_Thiolase"/>
</dbReference>
<dbReference type="InterPro" id="IPR020615">
    <property type="entry name" value="Thiolase_acyl_enz_int_AS"/>
</dbReference>
<dbReference type="InterPro" id="IPR020610">
    <property type="entry name" value="Thiolase_AS"/>
</dbReference>
<dbReference type="InterPro" id="IPR020617">
    <property type="entry name" value="Thiolase_C"/>
</dbReference>
<dbReference type="InterPro" id="IPR020613">
    <property type="entry name" value="Thiolase_CS"/>
</dbReference>
<dbReference type="InterPro" id="IPR020616">
    <property type="entry name" value="Thiolase_N"/>
</dbReference>
<dbReference type="NCBIfam" id="TIGR01930">
    <property type="entry name" value="AcCoA-C-Actrans"/>
    <property type="match status" value="1"/>
</dbReference>
<dbReference type="NCBIfam" id="TIGR02445">
    <property type="entry name" value="fadA"/>
    <property type="match status" value="1"/>
</dbReference>
<dbReference type="NCBIfam" id="NF006510">
    <property type="entry name" value="PRK08947.1"/>
    <property type="match status" value="1"/>
</dbReference>
<dbReference type="PANTHER" id="PTHR43853:SF11">
    <property type="entry name" value="3-KETOACYL-COA THIOLASE FADA"/>
    <property type="match status" value="1"/>
</dbReference>
<dbReference type="PANTHER" id="PTHR43853">
    <property type="entry name" value="3-KETOACYL-COA THIOLASE, PEROXISOMAL"/>
    <property type="match status" value="1"/>
</dbReference>
<dbReference type="Pfam" id="PF02803">
    <property type="entry name" value="Thiolase_C"/>
    <property type="match status" value="1"/>
</dbReference>
<dbReference type="Pfam" id="PF00108">
    <property type="entry name" value="Thiolase_N"/>
    <property type="match status" value="1"/>
</dbReference>
<dbReference type="PIRSF" id="PIRSF000429">
    <property type="entry name" value="Ac-CoA_Ac_transf"/>
    <property type="match status" value="1"/>
</dbReference>
<dbReference type="SUPFAM" id="SSF53901">
    <property type="entry name" value="Thiolase-like"/>
    <property type="match status" value="2"/>
</dbReference>
<dbReference type="PROSITE" id="PS00098">
    <property type="entry name" value="THIOLASE_1"/>
    <property type="match status" value="1"/>
</dbReference>
<dbReference type="PROSITE" id="PS00737">
    <property type="entry name" value="THIOLASE_2"/>
    <property type="match status" value="1"/>
</dbReference>
<dbReference type="PROSITE" id="PS00099">
    <property type="entry name" value="THIOLASE_3"/>
    <property type="match status" value="1"/>
</dbReference>
<keyword id="KW-0012">Acyltransferase</keyword>
<keyword id="KW-0963">Cytoplasm</keyword>
<keyword id="KW-0276">Fatty acid metabolism</keyword>
<keyword id="KW-0442">Lipid degradation</keyword>
<keyword id="KW-0443">Lipid metabolism</keyword>
<keyword id="KW-1185">Reference proteome</keyword>
<keyword id="KW-0808">Transferase</keyword>
<accession>A3Q8U3</accession>
<sequence>MKQAVIVDCIRTPMGRSKAGVFRNMRAESLSAELMKALLVRNPQLDPNTIEDVIWGCVQQTLEQGFNIARNAALLAGIPKQAGAVTVNRLCGSSMEAIHQAARAIMTGMGDTFIVGGVEHMGHVPMNHGVDFHPGLATNVAKASGMMGLTAEMLGKMHGITRQQQDEFAVRSHQRAHAATVEGRFANEIHAIEGHDANGALIKVMHDEVIRPETSLESLATLRPVFDPANGTVTAGTSSALSDGASAMLVMEEEKAKALGLPIRARIRSMAVAGCDAAIMGYGPVPATQKALQRAGLTMNDIDLIELNEAFAAQSLPCVKDLGLMDLVDEKVNLNGGAIALGHPLGCSGARISTTLINLMESKDATLGLATMCIGLGQGIATVFERA</sequence>
<name>FADA_SHELP</name>
<proteinExistence type="inferred from homology"/>
<comment type="function">
    <text evidence="1">Catalyzes the final step of fatty acid oxidation in which acetyl-CoA is released and the CoA ester of a fatty acid two carbons shorter is formed.</text>
</comment>
<comment type="catalytic activity">
    <reaction evidence="1">
        <text>an acyl-CoA + acetyl-CoA = a 3-oxoacyl-CoA + CoA</text>
        <dbReference type="Rhea" id="RHEA:21564"/>
        <dbReference type="ChEBI" id="CHEBI:57287"/>
        <dbReference type="ChEBI" id="CHEBI:57288"/>
        <dbReference type="ChEBI" id="CHEBI:58342"/>
        <dbReference type="ChEBI" id="CHEBI:90726"/>
        <dbReference type="EC" id="2.3.1.16"/>
    </reaction>
</comment>
<comment type="pathway">
    <text evidence="1">Lipid metabolism; fatty acid beta-oxidation.</text>
</comment>
<comment type="subunit">
    <text evidence="1">Heterotetramer of two alpha chains (FadB) and two beta chains (FadA).</text>
</comment>
<comment type="subcellular location">
    <subcellularLocation>
        <location evidence="1">Cytoplasm</location>
    </subcellularLocation>
</comment>
<comment type="similarity">
    <text evidence="1">Belongs to the thiolase-like superfamily. Thiolase family.</text>
</comment>
<organism>
    <name type="scientific">Shewanella loihica (strain ATCC BAA-1088 / PV-4)</name>
    <dbReference type="NCBI Taxonomy" id="323850"/>
    <lineage>
        <taxon>Bacteria</taxon>
        <taxon>Pseudomonadati</taxon>
        <taxon>Pseudomonadota</taxon>
        <taxon>Gammaproteobacteria</taxon>
        <taxon>Alteromonadales</taxon>
        <taxon>Shewanellaceae</taxon>
        <taxon>Shewanella</taxon>
    </lineage>
</organism>
<evidence type="ECO:0000255" key="1">
    <source>
        <dbReference type="HAMAP-Rule" id="MF_01620"/>
    </source>
</evidence>
<protein>
    <recommendedName>
        <fullName evidence="1">3-ketoacyl-CoA thiolase</fullName>
        <ecNumber evidence="1">2.3.1.16</ecNumber>
    </recommendedName>
    <alternativeName>
        <fullName evidence="1">Acetyl-CoA acyltransferase</fullName>
    </alternativeName>
    <alternativeName>
        <fullName evidence="1">Beta-ketothiolase</fullName>
    </alternativeName>
    <alternativeName>
        <fullName evidence="1">Fatty acid oxidation complex subunit beta</fullName>
    </alternativeName>
</protein>
<reference key="1">
    <citation type="submission" date="2007-03" db="EMBL/GenBank/DDBJ databases">
        <title>Complete sequence of Shewanella loihica PV-4.</title>
        <authorList>
            <consortium name="US DOE Joint Genome Institute"/>
            <person name="Copeland A."/>
            <person name="Lucas S."/>
            <person name="Lapidus A."/>
            <person name="Barry K."/>
            <person name="Detter J.C."/>
            <person name="Glavina del Rio T."/>
            <person name="Hammon N."/>
            <person name="Israni S."/>
            <person name="Dalin E."/>
            <person name="Tice H."/>
            <person name="Pitluck S."/>
            <person name="Chain P."/>
            <person name="Malfatti S."/>
            <person name="Shin M."/>
            <person name="Vergez L."/>
            <person name="Schmutz J."/>
            <person name="Larimer F."/>
            <person name="Land M."/>
            <person name="Hauser L."/>
            <person name="Kyrpides N."/>
            <person name="Mikhailova N."/>
            <person name="Romine M.F."/>
            <person name="Serres G."/>
            <person name="Fredrickson J."/>
            <person name="Tiedje J."/>
            <person name="Richardson P."/>
        </authorList>
    </citation>
    <scope>NUCLEOTIDE SEQUENCE [LARGE SCALE GENOMIC DNA]</scope>
    <source>
        <strain>ATCC BAA-1088 / PV-4</strain>
    </source>
</reference>
<gene>
    <name evidence="1" type="primary">fadA</name>
    <name type="ordered locus">Shew_0018</name>
</gene>